<accession>B5F571</accession>
<comment type="function">
    <text evidence="2">Involved in mRNA degradation. Hydrolyzes single-stranded polyribonucleotides processively in the 3' to 5' direction.</text>
</comment>
<comment type="catalytic activity">
    <reaction evidence="2">
        <text>Exonucleolytic cleavage in the 3'- to 5'-direction to yield nucleoside 5'-phosphates.</text>
        <dbReference type="EC" id="3.1.13.1"/>
    </reaction>
</comment>
<comment type="subcellular location">
    <subcellularLocation>
        <location evidence="2">Cytoplasm</location>
    </subcellularLocation>
</comment>
<comment type="similarity">
    <text evidence="2">Belongs to the RNR ribonuclease family. RNase II subfamily.</text>
</comment>
<name>RNB_SALA4</name>
<evidence type="ECO:0000255" key="1"/>
<evidence type="ECO:0000255" key="2">
    <source>
        <dbReference type="HAMAP-Rule" id="MF_01036"/>
    </source>
</evidence>
<reference key="1">
    <citation type="journal article" date="2011" name="J. Bacteriol.">
        <title>Comparative genomics of 28 Salmonella enterica isolates: evidence for CRISPR-mediated adaptive sublineage evolution.</title>
        <authorList>
            <person name="Fricke W.F."/>
            <person name="Mammel M.K."/>
            <person name="McDermott P.F."/>
            <person name="Tartera C."/>
            <person name="White D.G."/>
            <person name="Leclerc J.E."/>
            <person name="Ravel J."/>
            <person name="Cebula T.A."/>
        </authorList>
    </citation>
    <scope>NUCLEOTIDE SEQUENCE [LARGE SCALE GENOMIC DNA]</scope>
    <source>
        <strain>SL483</strain>
    </source>
</reference>
<feature type="chain" id="PRO_1000135873" description="Exoribonuclease 2">
    <location>
        <begin position="1"/>
        <end position="644"/>
    </location>
</feature>
<feature type="domain" description="RNB" evidence="1">
    <location>
        <begin position="189"/>
        <end position="516"/>
    </location>
</feature>
<feature type="domain" description="S1 motif" evidence="2">
    <location>
        <begin position="561"/>
        <end position="643"/>
    </location>
</feature>
<dbReference type="EC" id="3.1.13.1" evidence="2"/>
<dbReference type="EMBL" id="CP001138">
    <property type="protein sequence ID" value="ACH51031.1"/>
    <property type="molecule type" value="Genomic_DNA"/>
</dbReference>
<dbReference type="RefSeq" id="WP_000485041.1">
    <property type="nucleotide sequence ID" value="NC_011149.1"/>
</dbReference>
<dbReference type="SMR" id="B5F571"/>
<dbReference type="KEGG" id="sea:SeAg_B1448"/>
<dbReference type="HOGENOM" id="CLU_002333_7_3_6"/>
<dbReference type="Proteomes" id="UP000008819">
    <property type="component" value="Chromosome"/>
</dbReference>
<dbReference type="GO" id="GO:0005829">
    <property type="term" value="C:cytosol"/>
    <property type="evidence" value="ECO:0007669"/>
    <property type="project" value="TreeGrafter"/>
</dbReference>
<dbReference type="GO" id="GO:0008859">
    <property type="term" value="F:exoribonuclease II activity"/>
    <property type="evidence" value="ECO:0007669"/>
    <property type="project" value="UniProtKB-UniRule"/>
</dbReference>
<dbReference type="GO" id="GO:0003723">
    <property type="term" value="F:RNA binding"/>
    <property type="evidence" value="ECO:0007669"/>
    <property type="project" value="UniProtKB-KW"/>
</dbReference>
<dbReference type="GO" id="GO:0006402">
    <property type="term" value="P:mRNA catabolic process"/>
    <property type="evidence" value="ECO:0007669"/>
    <property type="project" value="UniProtKB-UniRule"/>
</dbReference>
<dbReference type="FunFam" id="2.40.50.140:FF:000079">
    <property type="entry name" value="Exoribonuclease 2"/>
    <property type="match status" value="1"/>
</dbReference>
<dbReference type="FunFam" id="2.40.50.140:FF:000081">
    <property type="entry name" value="Exoribonuclease 2"/>
    <property type="match status" value="1"/>
</dbReference>
<dbReference type="FunFam" id="2.40.50.640:FF:000001">
    <property type="entry name" value="Exoribonuclease 2"/>
    <property type="match status" value="1"/>
</dbReference>
<dbReference type="Gene3D" id="2.40.50.640">
    <property type="match status" value="1"/>
</dbReference>
<dbReference type="Gene3D" id="2.40.50.140">
    <property type="entry name" value="Nucleic acid-binding proteins"/>
    <property type="match status" value="2"/>
</dbReference>
<dbReference type="HAMAP" id="MF_01036">
    <property type="entry name" value="RNase_II"/>
    <property type="match status" value="1"/>
</dbReference>
<dbReference type="InterPro" id="IPR011129">
    <property type="entry name" value="CSD"/>
</dbReference>
<dbReference type="InterPro" id="IPR012340">
    <property type="entry name" value="NA-bd_OB-fold"/>
</dbReference>
<dbReference type="InterPro" id="IPR013223">
    <property type="entry name" value="RNase_B_OB_dom"/>
</dbReference>
<dbReference type="InterPro" id="IPR011804">
    <property type="entry name" value="RNase_II"/>
</dbReference>
<dbReference type="InterPro" id="IPR001900">
    <property type="entry name" value="RNase_II/R"/>
</dbReference>
<dbReference type="InterPro" id="IPR022966">
    <property type="entry name" value="RNase_II/R_CS"/>
</dbReference>
<dbReference type="InterPro" id="IPR004476">
    <property type="entry name" value="RNase_II/RNase_R"/>
</dbReference>
<dbReference type="InterPro" id="IPR050180">
    <property type="entry name" value="RNR_Ribonuclease"/>
</dbReference>
<dbReference type="InterPro" id="IPR003029">
    <property type="entry name" value="S1_domain"/>
</dbReference>
<dbReference type="NCBIfam" id="TIGR00358">
    <property type="entry name" value="3_prime_RNase"/>
    <property type="match status" value="1"/>
</dbReference>
<dbReference type="NCBIfam" id="NF003455">
    <property type="entry name" value="PRK05054.1"/>
    <property type="match status" value="1"/>
</dbReference>
<dbReference type="NCBIfam" id="TIGR02062">
    <property type="entry name" value="RNase_B"/>
    <property type="match status" value="1"/>
</dbReference>
<dbReference type="PANTHER" id="PTHR23355:SF37">
    <property type="entry name" value="EXORIBONUCLEASE 2"/>
    <property type="match status" value="1"/>
</dbReference>
<dbReference type="PANTHER" id="PTHR23355">
    <property type="entry name" value="RIBONUCLEASE"/>
    <property type="match status" value="1"/>
</dbReference>
<dbReference type="Pfam" id="PF08206">
    <property type="entry name" value="OB_RNB"/>
    <property type="match status" value="1"/>
</dbReference>
<dbReference type="Pfam" id="PF00773">
    <property type="entry name" value="RNB"/>
    <property type="match status" value="1"/>
</dbReference>
<dbReference type="Pfam" id="PF00575">
    <property type="entry name" value="S1"/>
    <property type="match status" value="1"/>
</dbReference>
<dbReference type="SMART" id="SM00357">
    <property type="entry name" value="CSP"/>
    <property type="match status" value="1"/>
</dbReference>
<dbReference type="SMART" id="SM00955">
    <property type="entry name" value="RNB"/>
    <property type="match status" value="1"/>
</dbReference>
<dbReference type="SUPFAM" id="SSF50249">
    <property type="entry name" value="Nucleic acid-binding proteins"/>
    <property type="match status" value="4"/>
</dbReference>
<dbReference type="PROSITE" id="PS01175">
    <property type="entry name" value="RIBONUCLEASE_II"/>
    <property type="match status" value="1"/>
</dbReference>
<keyword id="KW-0963">Cytoplasm</keyword>
<keyword id="KW-0269">Exonuclease</keyword>
<keyword id="KW-0378">Hydrolase</keyword>
<keyword id="KW-0540">Nuclease</keyword>
<keyword id="KW-0694">RNA-binding</keyword>
<sequence length="644" mass="72409">MFQDNPLLAQLKQQLHSQTPRAEGVVKATEKGFGFLEVDAQKSYFIPPPQMKKVMHGDRIVAVIHTEKERESAEPEELIEPFLTRFVGKVQGKNDRLSIVPDHPLLKDAIPCRAARGVQHEFKEGDWAVAEMRRHPLKGDRSFYADLTQYITFADDHFVPWWVTLARHNLEKEAPNGVATEMLDEGLERQDLTALNFVTIDSASTEDMDDALYAEELADGRLQLTVAIADPTAWIAEGSKLDNAAKIRAFTNYLPGFNIPMLPRELSDDLCSLRANEVRPALACRMIIAADGTIDDDIAFFAATIESKAKLAYDNVSDWLENNGTWQPDNEGIAQQIRLLHRICLSRSEWRHHHALVFKDRPDYRFVLGEKGEVLDIVAEPRRIANRIVEESMIAANLCAARVLRDKLGFGIYNVHTGFDPANADALAALLKTHGLHVDAEEVLTLEGFCKLRRELDAQPSGFLDSRIRRFQSFAEISTEPGPHFGLGLEAYATWTSPIRKYGDMINHRLLKAVIKGEAIARPQEDITQQMAERRRLNRMAERDVGDWLYARFLNDKAGTNTRFAAEIIDVSRGGMRVRLVDNGAIAFIPAPFLHAVRDELVCSQENGTVQIKGETVYKVTDVIDVTIAEVRMETRSIIARPAA</sequence>
<protein>
    <recommendedName>
        <fullName evidence="2">Exoribonuclease 2</fullName>
        <ecNumber evidence="2">3.1.13.1</ecNumber>
    </recommendedName>
    <alternativeName>
        <fullName evidence="2">Exoribonuclease II</fullName>
        <shortName evidence="2">RNase II</shortName>
        <shortName evidence="2">Ribonuclease II</shortName>
    </alternativeName>
</protein>
<organism>
    <name type="scientific">Salmonella agona (strain SL483)</name>
    <dbReference type="NCBI Taxonomy" id="454166"/>
    <lineage>
        <taxon>Bacteria</taxon>
        <taxon>Pseudomonadati</taxon>
        <taxon>Pseudomonadota</taxon>
        <taxon>Gammaproteobacteria</taxon>
        <taxon>Enterobacterales</taxon>
        <taxon>Enterobacteriaceae</taxon>
        <taxon>Salmonella</taxon>
    </lineage>
</organism>
<proteinExistence type="inferred from homology"/>
<gene>
    <name evidence="2" type="primary">rnb</name>
    <name type="ordered locus">SeAg_B1448</name>
</gene>